<protein>
    <recommendedName>
        <fullName evidence="1">Hydroxylamine reductase</fullName>
        <ecNumber evidence="1">1.7.99.1</ecNumber>
    </recommendedName>
    <alternativeName>
        <fullName evidence="1">Hybrid-cluster protein</fullName>
        <shortName evidence="1">HCP</shortName>
    </alternativeName>
    <alternativeName>
        <fullName evidence="1">Prismane protein</fullName>
    </alternativeName>
</protein>
<reference key="1">
    <citation type="journal article" date="2007" name="PLoS ONE">
        <title>Analysis of the neurotoxin complex genes in Clostridium botulinum A1-A4 and B1 strains: BoNT/A3, /Ba4 and /B1 clusters are located within plasmids.</title>
        <authorList>
            <person name="Smith T.J."/>
            <person name="Hill K.K."/>
            <person name="Foley B.T."/>
            <person name="Detter J.C."/>
            <person name="Munk A.C."/>
            <person name="Bruce D.C."/>
            <person name="Doggett N.A."/>
            <person name="Smith L.A."/>
            <person name="Marks J.D."/>
            <person name="Xie G."/>
            <person name="Brettin T.S."/>
        </authorList>
    </citation>
    <scope>NUCLEOTIDE SEQUENCE [LARGE SCALE GENOMIC DNA]</scope>
    <source>
        <strain>Okra / Type B1</strain>
    </source>
</reference>
<accession>B1IKK5</accession>
<comment type="function">
    <text evidence="1">Catalyzes the reduction of hydroxylamine to form NH(3) and H(2)O.</text>
</comment>
<comment type="catalytic activity">
    <reaction evidence="1">
        <text>A + NH4(+) + H2O = hydroxylamine + AH2 + H(+)</text>
        <dbReference type="Rhea" id="RHEA:22052"/>
        <dbReference type="ChEBI" id="CHEBI:13193"/>
        <dbReference type="ChEBI" id="CHEBI:15377"/>
        <dbReference type="ChEBI" id="CHEBI:15378"/>
        <dbReference type="ChEBI" id="CHEBI:15429"/>
        <dbReference type="ChEBI" id="CHEBI:17499"/>
        <dbReference type="ChEBI" id="CHEBI:28938"/>
        <dbReference type="EC" id="1.7.99.1"/>
    </reaction>
</comment>
<comment type="cofactor">
    <cofactor evidence="1">
        <name>[4Fe-4S] cluster</name>
        <dbReference type="ChEBI" id="CHEBI:49883"/>
    </cofactor>
    <text evidence="1">Binds 1 [4Fe-4S] cluster.</text>
</comment>
<comment type="cofactor">
    <cofactor evidence="1">
        <name>hybrid [4Fe-2O-2S] cluster</name>
        <dbReference type="ChEBI" id="CHEBI:60519"/>
    </cofactor>
    <text evidence="1">Binds 1 hybrid [4Fe-2O-2S] cluster.</text>
</comment>
<comment type="subcellular location">
    <subcellularLocation>
        <location evidence="1">Cytoplasm</location>
    </subcellularLocation>
</comment>
<comment type="similarity">
    <text evidence="1">Belongs to the HCP family.</text>
</comment>
<feature type="chain" id="PRO_1000092331" description="Hydroxylamine reductase">
    <location>
        <begin position="1"/>
        <end position="570"/>
    </location>
</feature>
<feature type="binding site" evidence="1">
    <location>
        <position position="5"/>
    </location>
    <ligand>
        <name>[4Fe-4S] cluster</name>
        <dbReference type="ChEBI" id="CHEBI:49883"/>
    </ligand>
</feature>
<feature type="binding site" evidence="1">
    <location>
        <position position="8"/>
    </location>
    <ligand>
        <name>[4Fe-4S] cluster</name>
        <dbReference type="ChEBI" id="CHEBI:49883"/>
    </ligand>
</feature>
<feature type="binding site" evidence="1">
    <location>
        <position position="17"/>
    </location>
    <ligand>
        <name>[4Fe-4S] cluster</name>
        <dbReference type="ChEBI" id="CHEBI:49883"/>
    </ligand>
</feature>
<feature type="binding site" evidence="1">
    <location>
        <position position="23"/>
    </location>
    <ligand>
        <name>[4Fe-4S] cluster</name>
        <dbReference type="ChEBI" id="CHEBI:49883"/>
    </ligand>
</feature>
<feature type="binding site" evidence="1">
    <location>
        <position position="266"/>
    </location>
    <ligand>
        <name>hybrid [4Fe-2O-2S] cluster</name>
        <dbReference type="ChEBI" id="CHEBI:60519"/>
    </ligand>
</feature>
<feature type="binding site" evidence="1">
    <location>
        <position position="290"/>
    </location>
    <ligand>
        <name>hybrid [4Fe-2O-2S] cluster</name>
        <dbReference type="ChEBI" id="CHEBI:60519"/>
    </ligand>
</feature>
<feature type="binding site" evidence="1">
    <location>
        <position position="334"/>
    </location>
    <ligand>
        <name>hybrid [4Fe-2O-2S] cluster</name>
        <dbReference type="ChEBI" id="CHEBI:60519"/>
    </ligand>
</feature>
<feature type="binding site" description="via persulfide group" evidence="1">
    <location>
        <position position="425"/>
    </location>
    <ligand>
        <name>hybrid [4Fe-2O-2S] cluster</name>
        <dbReference type="ChEBI" id="CHEBI:60519"/>
    </ligand>
</feature>
<feature type="binding site" evidence="1">
    <location>
        <position position="453"/>
    </location>
    <ligand>
        <name>hybrid [4Fe-2O-2S] cluster</name>
        <dbReference type="ChEBI" id="CHEBI:60519"/>
    </ligand>
</feature>
<feature type="binding site" evidence="1">
    <location>
        <position position="478"/>
    </location>
    <ligand>
        <name>hybrid [4Fe-2O-2S] cluster</name>
        <dbReference type="ChEBI" id="CHEBI:60519"/>
    </ligand>
</feature>
<feature type="binding site" evidence="1">
    <location>
        <position position="513"/>
    </location>
    <ligand>
        <name>hybrid [4Fe-2O-2S] cluster</name>
        <dbReference type="ChEBI" id="CHEBI:60519"/>
    </ligand>
</feature>
<feature type="binding site" evidence="1">
    <location>
        <position position="515"/>
    </location>
    <ligand>
        <name>hybrid [4Fe-2O-2S] cluster</name>
        <dbReference type="ChEBI" id="CHEBI:60519"/>
    </ligand>
</feature>
<feature type="modified residue" description="Cysteine persulfide" evidence="1">
    <location>
        <position position="425"/>
    </location>
</feature>
<gene>
    <name evidence="1" type="primary">hcp</name>
    <name type="ordered locus">CLD_1781</name>
</gene>
<sequence>MSMFCYQCQEAAGGRGCTVKGVCGKTEDIAKTQDLIIYVVKGIAIYSSQVREIGLNTSEADKFIVESLFSTITNANFDAKALNARVQEGLKIRQSLKDAIIKAGGSYNSKENKSWTSKFLSVLGIKNDKDEKEIHDAAVWAANNPEDFKKKAETVGVLATENEDIRSLRELLTYGLKGMAAYLEHANNLGYDEDSIHAFMEKALVATLDDTLSADELTALVLECGKYGVDVMALLDKANTSTYGNPEITKVNIGVRNNPGILISGHDLKDMEELLKQTEGTGVDVYTHSEMLPANYYPAFKKYKHFVGNYGNAWWKQNEEFEAFNGPILMTTNCIVTPKASYKDRMYTTGVTGFEGVKHINASKDGKKDFSEIIEHAKRCSSPKEIEKGEIIGGFAHNQVLALAPQVVDAVKTGAIKRFFVMAGCDGRMKSRNYYTDFAKALPKDTVILTAGCAKYKYNKLDLGDINGIPRVLDAGQCNDSYSLAVIALKLKEVFELEDINELPISYNIAWYEQKAVIVLLALLHLGVKNIHLGPTLPAFLSPNVAKILVENFGIGTISSVDEDIKMFMN</sequence>
<evidence type="ECO:0000255" key="1">
    <source>
        <dbReference type="HAMAP-Rule" id="MF_00069"/>
    </source>
</evidence>
<keyword id="KW-0004">4Fe-4S</keyword>
<keyword id="KW-0963">Cytoplasm</keyword>
<keyword id="KW-0408">Iron</keyword>
<keyword id="KW-0411">Iron-sulfur</keyword>
<keyword id="KW-0479">Metal-binding</keyword>
<keyword id="KW-0560">Oxidoreductase</keyword>
<name>HCP_CLOBK</name>
<dbReference type="EC" id="1.7.99.1" evidence="1"/>
<dbReference type="EMBL" id="CP000939">
    <property type="protein sequence ID" value="ACA46337.1"/>
    <property type="molecule type" value="Genomic_DNA"/>
</dbReference>
<dbReference type="RefSeq" id="WP_004451000.1">
    <property type="nucleotide sequence ID" value="NC_010516.1"/>
</dbReference>
<dbReference type="SMR" id="B1IKK5"/>
<dbReference type="KEGG" id="cbb:CLD_1781"/>
<dbReference type="HOGENOM" id="CLU_038344_2_0_9"/>
<dbReference type="Proteomes" id="UP000008541">
    <property type="component" value="Chromosome"/>
</dbReference>
<dbReference type="GO" id="GO:0005737">
    <property type="term" value="C:cytoplasm"/>
    <property type="evidence" value="ECO:0007669"/>
    <property type="project" value="UniProtKB-SubCell"/>
</dbReference>
<dbReference type="GO" id="GO:0051539">
    <property type="term" value="F:4 iron, 4 sulfur cluster binding"/>
    <property type="evidence" value="ECO:0007669"/>
    <property type="project" value="UniProtKB-KW"/>
</dbReference>
<dbReference type="GO" id="GO:0050418">
    <property type="term" value="F:hydroxylamine reductase activity"/>
    <property type="evidence" value="ECO:0007669"/>
    <property type="project" value="UniProtKB-UniRule"/>
</dbReference>
<dbReference type="GO" id="GO:0046872">
    <property type="term" value="F:metal ion binding"/>
    <property type="evidence" value="ECO:0007669"/>
    <property type="project" value="UniProtKB-KW"/>
</dbReference>
<dbReference type="GO" id="GO:0004601">
    <property type="term" value="F:peroxidase activity"/>
    <property type="evidence" value="ECO:0007669"/>
    <property type="project" value="TreeGrafter"/>
</dbReference>
<dbReference type="GO" id="GO:0042542">
    <property type="term" value="P:response to hydrogen peroxide"/>
    <property type="evidence" value="ECO:0007669"/>
    <property type="project" value="TreeGrafter"/>
</dbReference>
<dbReference type="CDD" id="cd01914">
    <property type="entry name" value="HCP"/>
    <property type="match status" value="1"/>
</dbReference>
<dbReference type="FunFam" id="1.20.1270.20:FF:000001">
    <property type="entry name" value="Hydroxylamine reductase"/>
    <property type="match status" value="1"/>
</dbReference>
<dbReference type="FunFam" id="1.20.1270.20:FF:000003">
    <property type="entry name" value="Hydroxylamine reductase"/>
    <property type="match status" value="1"/>
</dbReference>
<dbReference type="FunFam" id="3.40.50.2030:FF:000001">
    <property type="entry name" value="Hydroxylamine reductase"/>
    <property type="match status" value="1"/>
</dbReference>
<dbReference type="FunFam" id="3.40.50.2030:FF:000002">
    <property type="entry name" value="Hydroxylamine reductase"/>
    <property type="match status" value="1"/>
</dbReference>
<dbReference type="Gene3D" id="1.20.1270.20">
    <property type="match status" value="2"/>
</dbReference>
<dbReference type="Gene3D" id="3.40.50.2030">
    <property type="match status" value="2"/>
</dbReference>
<dbReference type="HAMAP" id="MF_00069">
    <property type="entry name" value="Hydroxylam_reduct"/>
    <property type="match status" value="1"/>
</dbReference>
<dbReference type="InterPro" id="IPR004137">
    <property type="entry name" value="HCP/CODH"/>
</dbReference>
<dbReference type="InterPro" id="IPR010048">
    <property type="entry name" value="Hydroxylam_reduct"/>
</dbReference>
<dbReference type="InterPro" id="IPR016099">
    <property type="entry name" value="Prismane-like_a/b-sand"/>
</dbReference>
<dbReference type="InterPro" id="IPR011254">
    <property type="entry name" value="Prismane-like_sf"/>
</dbReference>
<dbReference type="InterPro" id="IPR016100">
    <property type="entry name" value="Prismane_a-bundle"/>
</dbReference>
<dbReference type="NCBIfam" id="TIGR01703">
    <property type="entry name" value="hybrid_clust"/>
    <property type="match status" value="1"/>
</dbReference>
<dbReference type="NCBIfam" id="NF003658">
    <property type="entry name" value="PRK05290.1"/>
    <property type="match status" value="1"/>
</dbReference>
<dbReference type="PANTHER" id="PTHR30109">
    <property type="entry name" value="HYDROXYLAMINE REDUCTASE"/>
    <property type="match status" value="1"/>
</dbReference>
<dbReference type="PANTHER" id="PTHR30109:SF0">
    <property type="entry name" value="HYDROXYLAMINE REDUCTASE"/>
    <property type="match status" value="1"/>
</dbReference>
<dbReference type="Pfam" id="PF03063">
    <property type="entry name" value="Prismane"/>
    <property type="match status" value="1"/>
</dbReference>
<dbReference type="PIRSF" id="PIRSF000076">
    <property type="entry name" value="HCP"/>
    <property type="match status" value="1"/>
</dbReference>
<dbReference type="SUPFAM" id="SSF56821">
    <property type="entry name" value="Prismane protein-like"/>
    <property type="match status" value="1"/>
</dbReference>
<proteinExistence type="inferred from homology"/>
<organism>
    <name type="scientific">Clostridium botulinum (strain Okra / Type B1)</name>
    <dbReference type="NCBI Taxonomy" id="498213"/>
    <lineage>
        <taxon>Bacteria</taxon>
        <taxon>Bacillati</taxon>
        <taxon>Bacillota</taxon>
        <taxon>Clostridia</taxon>
        <taxon>Eubacteriales</taxon>
        <taxon>Clostridiaceae</taxon>
        <taxon>Clostridium</taxon>
    </lineage>
</organism>